<evidence type="ECO:0000255" key="1">
    <source>
        <dbReference type="HAMAP-Rule" id="MF_01331"/>
    </source>
</evidence>
<evidence type="ECO:0000305" key="2"/>
<dbReference type="EMBL" id="CP000435">
    <property type="protein sequence ID" value="ABI46042.1"/>
    <property type="molecule type" value="Genomic_DNA"/>
</dbReference>
<dbReference type="RefSeq" id="WP_011618395.1">
    <property type="nucleotide sequence ID" value="NC_008319.1"/>
</dbReference>
<dbReference type="SMR" id="Q0ID10"/>
<dbReference type="STRING" id="64471.sync_0432"/>
<dbReference type="KEGG" id="syg:sync_0432"/>
<dbReference type="eggNOG" id="COG0091">
    <property type="taxonomic scope" value="Bacteria"/>
</dbReference>
<dbReference type="HOGENOM" id="CLU_083987_3_2_3"/>
<dbReference type="OrthoDB" id="9805969at2"/>
<dbReference type="Proteomes" id="UP000001961">
    <property type="component" value="Chromosome"/>
</dbReference>
<dbReference type="GO" id="GO:0022625">
    <property type="term" value="C:cytosolic large ribosomal subunit"/>
    <property type="evidence" value="ECO:0007669"/>
    <property type="project" value="TreeGrafter"/>
</dbReference>
<dbReference type="GO" id="GO:0019843">
    <property type="term" value="F:rRNA binding"/>
    <property type="evidence" value="ECO:0007669"/>
    <property type="project" value="UniProtKB-UniRule"/>
</dbReference>
<dbReference type="GO" id="GO:0003735">
    <property type="term" value="F:structural constituent of ribosome"/>
    <property type="evidence" value="ECO:0007669"/>
    <property type="project" value="InterPro"/>
</dbReference>
<dbReference type="GO" id="GO:0006412">
    <property type="term" value="P:translation"/>
    <property type="evidence" value="ECO:0007669"/>
    <property type="project" value="UniProtKB-UniRule"/>
</dbReference>
<dbReference type="CDD" id="cd00336">
    <property type="entry name" value="Ribosomal_L22"/>
    <property type="match status" value="1"/>
</dbReference>
<dbReference type="Gene3D" id="3.90.470.10">
    <property type="entry name" value="Ribosomal protein L22/L17"/>
    <property type="match status" value="1"/>
</dbReference>
<dbReference type="HAMAP" id="MF_01331_B">
    <property type="entry name" value="Ribosomal_uL22_B"/>
    <property type="match status" value="1"/>
</dbReference>
<dbReference type="InterPro" id="IPR001063">
    <property type="entry name" value="Ribosomal_uL22"/>
</dbReference>
<dbReference type="InterPro" id="IPR005727">
    <property type="entry name" value="Ribosomal_uL22_bac/chlpt-type"/>
</dbReference>
<dbReference type="InterPro" id="IPR047867">
    <property type="entry name" value="Ribosomal_uL22_bac/org-type"/>
</dbReference>
<dbReference type="InterPro" id="IPR018260">
    <property type="entry name" value="Ribosomal_uL22_CS"/>
</dbReference>
<dbReference type="InterPro" id="IPR036394">
    <property type="entry name" value="Ribosomal_uL22_sf"/>
</dbReference>
<dbReference type="NCBIfam" id="TIGR01044">
    <property type="entry name" value="rplV_bact"/>
    <property type="match status" value="1"/>
</dbReference>
<dbReference type="PANTHER" id="PTHR13501">
    <property type="entry name" value="CHLOROPLAST 50S RIBOSOMAL PROTEIN L22-RELATED"/>
    <property type="match status" value="1"/>
</dbReference>
<dbReference type="PANTHER" id="PTHR13501:SF8">
    <property type="entry name" value="LARGE RIBOSOMAL SUBUNIT PROTEIN UL22M"/>
    <property type="match status" value="1"/>
</dbReference>
<dbReference type="Pfam" id="PF00237">
    <property type="entry name" value="Ribosomal_L22"/>
    <property type="match status" value="1"/>
</dbReference>
<dbReference type="SUPFAM" id="SSF54843">
    <property type="entry name" value="Ribosomal protein L22"/>
    <property type="match status" value="1"/>
</dbReference>
<dbReference type="PROSITE" id="PS00464">
    <property type="entry name" value="RIBOSOMAL_L22"/>
    <property type="match status" value="1"/>
</dbReference>
<accession>Q0ID10</accession>
<sequence length="121" mass="13232">MTTSSPTATTAQAHGRFIRGSVSKVRRVLDQIRGRTYRDALIMLEFMPYRSTGPITKVLRSAVANAEHNLGLDPASLIISQATADMGPSMKRYRPRAQGRAYAIKKQTCHISIAVAAQTDS</sequence>
<feature type="chain" id="PRO_0000354524" description="Large ribosomal subunit protein uL22">
    <location>
        <begin position="1"/>
        <end position="121"/>
    </location>
</feature>
<keyword id="KW-1185">Reference proteome</keyword>
<keyword id="KW-0687">Ribonucleoprotein</keyword>
<keyword id="KW-0689">Ribosomal protein</keyword>
<keyword id="KW-0694">RNA-binding</keyword>
<keyword id="KW-0699">rRNA-binding</keyword>
<protein>
    <recommendedName>
        <fullName evidence="1">Large ribosomal subunit protein uL22</fullName>
    </recommendedName>
    <alternativeName>
        <fullName evidence="2">50S ribosomal protein L22</fullName>
    </alternativeName>
</protein>
<gene>
    <name evidence="1" type="primary">rplV</name>
    <name evidence="1" type="synonym">rpl22</name>
    <name type="ordered locus">sync_0432</name>
</gene>
<proteinExistence type="inferred from homology"/>
<organism>
    <name type="scientific">Synechococcus sp. (strain CC9311)</name>
    <dbReference type="NCBI Taxonomy" id="64471"/>
    <lineage>
        <taxon>Bacteria</taxon>
        <taxon>Bacillati</taxon>
        <taxon>Cyanobacteriota</taxon>
        <taxon>Cyanophyceae</taxon>
        <taxon>Synechococcales</taxon>
        <taxon>Synechococcaceae</taxon>
        <taxon>Synechococcus</taxon>
    </lineage>
</organism>
<reference key="1">
    <citation type="journal article" date="2006" name="Proc. Natl. Acad. Sci. U.S.A.">
        <title>Genome sequence of Synechococcus CC9311: insights into adaptation to a coastal environment.</title>
        <authorList>
            <person name="Palenik B."/>
            <person name="Ren Q."/>
            <person name="Dupont C.L."/>
            <person name="Myers G.S."/>
            <person name="Heidelberg J.F."/>
            <person name="Badger J.H."/>
            <person name="Madupu R."/>
            <person name="Nelson W.C."/>
            <person name="Brinkac L.M."/>
            <person name="Dodson R.J."/>
            <person name="Durkin A.S."/>
            <person name="Daugherty S.C."/>
            <person name="Sullivan S.A."/>
            <person name="Khouri H."/>
            <person name="Mohamoud Y."/>
            <person name="Halpin R."/>
            <person name="Paulsen I.T."/>
        </authorList>
    </citation>
    <scope>NUCLEOTIDE SEQUENCE [LARGE SCALE GENOMIC DNA]</scope>
    <source>
        <strain>CC9311</strain>
    </source>
</reference>
<comment type="function">
    <text evidence="1">This protein binds specifically to 23S rRNA; its binding is stimulated by other ribosomal proteins, e.g. L4, L17, and L20. It is important during the early stages of 50S assembly. It makes multiple contacts with different domains of the 23S rRNA in the assembled 50S subunit and ribosome (By similarity).</text>
</comment>
<comment type="function">
    <text evidence="1">The globular domain of the protein is located near the polypeptide exit tunnel on the outside of the subunit, while an extended beta-hairpin is found that lines the wall of the exit tunnel in the center of the 70S ribosome.</text>
</comment>
<comment type="subunit">
    <text evidence="1">Part of the 50S ribosomal subunit.</text>
</comment>
<comment type="similarity">
    <text evidence="1">Belongs to the universal ribosomal protein uL22 family.</text>
</comment>
<name>RL22_SYNS3</name>